<evidence type="ECO:0000255" key="1">
    <source>
        <dbReference type="HAMAP-Rule" id="MF_00811"/>
    </source>
</evidence>
<sequence>MQQLQNVIETAFERRADITPANVDTVTREAVKQVISLLDSGALRVAEKIDGQWVTHQWLKKAVLLSFRINDNQVIDGAESRYFDKVPMKFADYDEARFQKEGFRVVPPAAVRQGAFIARNTVLMPSYVNIGAYVDEGTMVDTWATVGSCAQIGKNVHLSGGVGIGGVLEPLQANPTIIEDNCFIGARSEVVEGVIVEEGSVISMGVYLGQSTKIYDRETGEVHYGRVPAGSVVVSGNLPSKDGKYSLYCAVIVKKVDAKTRGKVGINELLRTID</sequence>
<reference key="1">
    <citation type="journal article" date="2011" name="J. Bacteriol.">
        <title>Comparative genomics of 28 Salmonella enterica isolates: evidence for CRISPR-mediated adaptive sublineage evolution.</title>
        <authorList>
            <person name="Fricke W.F."/>
            <person name="Mammel M.K."/>
            <person name="McDermott P.F."/>
            <person name="Tartera C."/>
            <person name="White D.G."/>
            <person name="Leclerc J.E."/>
            <person name="Ravel J."/>
            <person name="Cebula T.A."/>
        </authorList>
    </citation>
    <scope>NUCLEOTIDE SEQUENCE [LARGE SCALE GENOMIC DNA]</scope>
    <source>
        <strain>SL254</strain>
    </source>
</reference>
<proteinExistence type="inferred from homology"/>
<organism>
    <name type="scientific">Salmonella newport (strain SL254)</name>
    <dbReference type="NCBI Taxonomy" id="423368"/>
    <lineage>
        <taxon>Bacteria</taxon>
        <taxon>Pseudomonadati</taxon>
        <taxon>Pseudomonadota</taxon>
        <taxon>Gammaproteobacteria</taxon>
        <taxon>Enterobacterales</taxon>
        <taxon>Enterobacteriaceae</taxon>
        <taxon>Salmonella</taxon>
    </lineage>
</organism>
<feature type="chain" id="PRO_1000134068" description="2,3,4,5-tetrahydropyridine-2,6-dicarboxylate N-succinyltransferase">
    <location>
        <begin position="1"/>
        <end position="274"/>
    </location>
</feature>
<keyword id="KW-0012">Acyltransferase</keyword>
<keyword id="KW-0028">Amino-acid biosynthesis</keyword>
<keyword id="KW-0963">Cytoplasm</keyword>
<keyword id="KW-0220">Diaminopimelate biosynthesis</keyword>
<keyword id="KW-0457">Lysine biosynthesis</keyword>
<keyword id="KW-0677">Repeat</keyword>
<keyword id="KW-0808">Transferase</keyword>
<accession>B4SUZ5</accession>
<dbReference type="EC" id="2.3.1.117" evidence="1"/>
<dbReference type="EMBL" id="CP001113">
    <property type="protein sequence ID" value="ACF65353.1"/>
    <property type="molecule type" value="Genomic_DNA"/>
</dbReference>
<dbReference type="RefSeq" id="WP_001186670.1">
    <property type="nucleotide sequence ID" value="NZ_CCMR01000003.1"/>
</dbReference>
<dbReference type="SMR" id="B4SUZ5"/>
<dbReference type="KEGG" id="see:SNSL254_A0234"/>
<dbReference type="HOGENOM" id="CLU_050859_0_1_6"/>
<dbReference type="UniPathway" id="UPA00034">
    <property type="reaction ID" value="UER00019"/>
</dbReference>
<dbReference type="Proteomes" id="UP000008824">
    <property type="component" value="Chromosome"/>
</dbReference>
<dbReference type="GO" id="GO:0005737">
    <property type="term" value="C:cytoplasm"/>
    <property type="evidence" value="ECO:0007669"/>
    <property type="project" value="UniProtKB-SubCell"/>
</dbReference>
<dbReference type="GO" id="GO:0008666">
    <property type="term" value="F:2,3,4,5-tetrahydropyridine-2,6-dicarboxylate N-succinyltransferase activity"/>
    <property type="evidence" value="ECO:0007669"/>
    <property type="project" value="UniProtKB-UniRule"/>
</dbReference>
<dbReference type="GO" id="GO:0016779">
    <property type="term" value="F:nucleotidyltransferase activity"/>
    <property type="evidence" value="ECO:0007669"/>
    <property type="project" value="TreeGrafter"/>
</dbReference>
<dbReference type="GO" id="GO:0019877">
    <property type="term" value="P:diaminopimelate biosynthetic process"/>
    <property type="evidence" value="ECO:0007669"/>
    <property type="project" value="UniProtKB-UniRule"/>
</dbReference>
<dbReference type="GO" id="GO:0009089">
    <property type="term" value="P:lysine biosynthetic process via diaminopimelate"/>
    <property type="evidence" value="ECO:0007669"/>
    <property type="project" value="UniProtKB-UniRule"/>
</dbReference>
<dbReference type="CDD" id="cd03350">
    <property type="entry name" value="LbH_THP_succinylT"/>
    <property type="match status" value="1"/>
</dbReference>
<dbReference type="FunFam" id="2.160.10.10:FF:000004">
    <property type="entry name" value="2,3,4,5-tetrahydropyridine-2,6-dicarboxylate N-succinyltransferase"/>
    <property type="match status" value="1"/>
</dbReference>
<dbReference type="Gene3D" id="2.160.10.10">
    <property type="entry name" value="Hexapeptide repeat proteins"/>
    <property type="match status" value="1"/>
</dbReference>
<dbReference type="Gene3D" id="1.10.166.10">
    <property type="entry name" value="Tetrahydrodipicolinate-N-succinyltransferase, N-terminal domain"/>
    <property type="match status" value="1"/>
</dbReference>
<dbReference type="HAMAP" id="MF_00811">
    <property type="entry name" value="DapD"/>
    <property type="match status" value="1"/>
</dbReference>
<dbReference type="InterPro" id="IPR005664">
    <property type="entry name" value="DapD_Trfase_Hexpep_rpt_fam"/>
</dbReference>
<dbReference type="InterPro" id="IPR001451">
    <property type="entry name" value="Hexapep"/>
</dbReference>
<dbReference type="InterPro" id="IPR018357">
    <property type="entry name" value="Hexapep_transf_CS"/>
</dbReference>
<dbReference type="InterPro" id="IPR023180">
    <property type="entry name" value="THP_succinylTrfase_dom1"/>
</dbReference>
<dbReference type="InterPro" id="IPR037133">
    <property type="entry name" value="THP_succinylTrfase_N_sf"/>
</dbReference>
<dbReference type="InterPro" id="IPR011004">
    <property type="entry name" value="Trimer_LpxA-like_sf"/>
</dbReference>
<dbReference type="NCBIfam" id="TIGR00965">
    <property type="entry name" value="dapD"/>
    <property type="match status" value="1"/>
</dbReference>
<dbReference type="NCBIfam" id="NF008808">
    <property type="entry name" value="PRK11830.1"/>
    <property type="match status" value="1"/>
</dbReference>
<dbReference type="PANTHER" id="PTHR19136:SF52">
    <property type="entry name" value="2,3,4,5-TETRAHYDROPYRIDINE-2,6-DICARBOXYLATE N-SUCCINYLTRANSFERASE"/>
    <property type="match status" value="1"/>
</dbReference>
<dbReference type="PANTHER" id="PTHR19136">
    <property type="entry name" value="MOLYBDENUM COFACTOR GUANYLYLTRANSFERASE"/>
    <property type="match status" value="1"/>
</dbReference>
<dbReference type="Pfam" id="PF14602">
    <property type="entry name" value="Hexapep_2"/>
    <property type="match status" value="1"/>
</dbReference>
<dbReference type="Pfam" id="PF14805">
    <property type="entry name" value="THDPS_N_2"/>
    <property type="match status" value="1"/>
</dbReference>
<dbReference type="SUPFAM" id="SSF51161">
    <property type="entry name" value="Trimeric LpxA-like enzymes"/>
    <property type="match status" value="1"/>
</dbReference>
<dbReference type="PROSITE" id="PS00101">
    <property type="entry name" value="HEXAPEP_TRANSFERASES"/>
    <property type="match status" value="1"/>
</dbReference>
<gene>
    <name evidence="1" type="primary">dapD</name>
    <name type="ordered locus">SNSL254_A0234</name>
</gene>
<name>DAPD_SALNS</name>
<protein>
    <recommendedName>
        <fullName evidence="1">2,3,4,5-tetrahydropyridine-2,6-dicarboxylate N-succinyltransferase</fullName>
        <ecNumber evidence="1">2.3.1.117</ecNumber>
    </recommendedName>
    <alternativeName>
        <fullName evidence="1">Tetrahydrodipicolinate N-succinyltransferase</fullName>
        <shortName evidence="1">THP succinyltransferase</shortName>
        <shortName evidence="1">Tetrahydropicolinate succinylase</shortName>
    </alternativeName>
</protein>
<comment type="catalytic activity">
    <reaction evidence="1">
        <text>(S)-2,3,4,5-tetrahydrodipicolinate + succinyl-CoA + H2O = (S)-2-succinylamino-6-oxoheptanedioate + CoA</text>
        <dbReference type="Rhea" id="RHEA:17325"/>
        <dbReference type="ChEBI" id="CHEBI:15377"/>
        <dbReference type="ChEBI" id="CHEBI:15685"/>
        <dbReference type="ChEBI" id="CHEBI:16845"/>
        <dbReference type="ChEBI" id="CHEBI:57287"/>
        <dbReference type="ChEBI" id="CHEBI:57292"/>
        <dbReference type="EC" id="2.3.1.117"/>
    </reaction>
</comment>
<comment type="pathway">
    <text evidence="1">Amino-acid biosynthesis; L-lysine biosynthesis via DAP pathway; LL-2,6-diaminopimelate from (S)-tetrahydrodipicolinate (succinylase route): step 1/3.</text>
</comment>
<comment type="subcellular location">
    <subcellularLocation>
        <location evidence="1">Cytoplasm</location>
    </subcellularLocation>
</comment>
<comment type="similarity">
    <text evidence="1">Belongs to the transferase hexapeptide repeat family.</text>
</comment>